<protein>
    <recommendedName>
        <fullName evidence="1">Large ribosomal subunit protein uL30</fullName>
    </recommendedName>
    <alternativeName>
        <fullName evidence="2">50S ribosomal protein L30</fullName>
    </alternativeName>
</protein>
<dbReference type="EMBL" id="CP000816">
    <property type="protein sequence ID" value="ABU82451.1"/>
    <property type="molecule type" value="Genomic_DNA"/>
</dbReference>
<dbReference type="RefSeq" id="WP_012123415.1">
    <property type="nucleotide sequence ID" value="NC_009776.1"/>
</dbReference>
<dbReference type="SMR" id="A8ABZ9"/>
<dbReference type="STRING" id="453591.Igni_1275"/>
<dbReference type="GeneID" id="5562947"/>
<dbReference type="KEGG" id="iho:Igni_1275"/>
<dbReference type="eggNOG" id="arCOG04086">
    <property type="taxonomic scope" value="Archaea"/>
</dbReference>
<dbReference type="HOGENOM" id="CLU_055156_6_0_2"/>
<dbReference type="OrthoDB" id="6379at2157"/>
<dbReference type="PhylomeDB" id="A8ABZ9"/>
<dbReference type="Proteomes" id="UP000000262">
    <property type="component" value="Chromosome"/>
</dbReference>
<dbReference type="GO" id="GO:0022625">
    <property type="term" value="C:cytosolic large ribosomal subunit"/>
    <property type="evidence" value="ECO:0007669"/>
    <property type="project" value="TreeGrafter"/>
</dbReference>
<dbReference type="GO" id="GO:0003723">
    <property type="term" value="F:RNA binding"/>
    <property type="evidence" value="ECO:0007669"/>
    <property type="project" value="TreeGrafter"/>
</dbReference>
<dbReference type="GO" id="GO:0003735">
    <property type="term" value="F:structural constituent of ribosome"/>
    <property type="evidence" value="ECO:0007669"/>
    <property type="project" value="InterPro"/>
</dbReference>
<dbReference type="GO" id="GO:0000463">
    <property type="term" value="P:maturation of LSU-rRNA from tricistronic rRNA transcript (SSU-rRNA, 5.8S rRNA, LSU-rRNA)"/>
    <property type="evidence" value="ECO:0007669"/>
    <property type="project" value="TreeGrafter"/>
</dbReference>
<dbReference type="GO" id="GO:0006412">
    <property type="term" value="P:translation"/>
    <property type="evidence" value="ECO:0007669"/>
    <property type="project" value="UniProtKB-UniRule"/>
</dbReference>
<dbReference type="CDD" id="cd01657">
    <property type="entry name" value="Ribosomal_L7_archeal_euk"/>
    <property type="match status" value="1"/>
</dbReference>
<dbReference type="Gene3D" id="1.10.15.30">
    <property type="match status" value="1"/>
</dbReference>
<dbReference type="Gene3D" id="3.30.1390.20">
    <property type="entry name" value="Ribosomal protein L30, ferredoxin-like fold domain"/>
    <property type="match status" value="1"/>
</dbReference>
<dbReference type="HAMAP" id="MF_01371_A">
    <property type="entry name" value="Ribosomal_uL30_A"/>
    <property type="match status" value="1"/>
</dbReference>
<dbReference type="InterPro" id="IPR036919">
    <property type="entry name" value="Ribo_uL30_ferredoxin-like_sf"/>
</dbReference>
<dbReference type="InterPro" id="IPR039699">
    <property type="entry name" value="Ribosomal_uL30"/>
</dbReference>
<dbReference type="InterPro" id="IPR005997">
    <property type="entry name" value="Ribosomal_uL30_arc"/>
</dbReference>
<dbReference type="InterPro" id="IPR035808">
    <property type="entry name" value="Ribosomal_uL30_euk_arc"/>
</dbReference>
<dbReference type="InterPro" id="IPR016082">
    <property type="entry name" value="Ribosomal_uL30_ferredoxin-like"/>
</dbReference>
<dbReference type="NCBIfam" id="NF004711">
    <property type="entry name" value="PRK06049.1"/>
    <property type="match status" value="1"/>
</dbReference>
<dbReference type="NCBIfam" id="TIGR01309">
    <property type="entry name" value="uL30_arch"/>
    <property type="match status" value="1"/>
</dbReference>
<dbReference type="PANTHER" id="PTHR11524">
    <property type="entry name" value="60S RIBOSOMAL PROTEIN L7"/>
    <property type="match status" value="1"/>
</dbReference>
<dbReference type="PANTHER" id="PTHR11524:SF16">
    <property type="entry name" value="LARGE RIBOSOMAL SUBUNIT PROTEIN UL30"/>
    <property type="match status" value="1"/>
</dbReference>
<dbReference type="Pfam" id="PF00327">
    <property type="entry name" value="Ribosomal_L30"/>
    <property type="match status" value="1"/>
</dbReference>
<dbReference type="SUPFAM" id="SSF55129">
    <property type="entry name" value="Ribosomal protein L30p/L7e"/>
    <property type="match status" value="1"/>
</dbReference>
<proteinExistence type="inferred from homology"/>
<feature type="chain" id="PRO_0000347162" description="Large ribosomal subunit protein uL30">
    <location>
        <begin position="1"/>
        <end position="159"/>
    </location>
</feature>
<gene>
    <name evidence="1" type="primary">rpl30</name>
    <name type="ordered locus">Igni_1275</name>
</gene>
<comment type="subunit">
    <text evidence="1">Part of the 50S ribosomal subunit.</text>
</comment>
<comment type="similarity">
    <text evidence="1">Belongs to the universal ribosomal protein uL30 family.</text>
</comment>
<name>RL30_IGNH4</name>
<organism>
    <name type="scientific">Ignicoccus hospitalis (strain KIN4/I / DSM 18386 / JCM 14125)</name>
    <dbReference type="NCBI Taxonomy" id="453591"/>
    <lineage>
        <taxon>Archaea</taxon>
        <taxon>Thermoproteota</taxon>
        <taxon>Thermoprotei</taxon>
        <taxon>Desulfurococcales</taxon>
        <taxon>Desulfurococcaceae</taxon>
        <taxon>Ignicoccus</taxon>
    </lineage>
</organism>
<evidence type="ECO:0000255" key="1">
    <source>
        <dbReference type="HAMAP-Rule" id="MF_01371"/>
    </source>
</evidence>
<evidence type="ECO:0000305" key="2"/>
<sequence length="159" mass="18190">MSKKLYLIIRIKGEPDAHPDVRKTLENLRLLRRYAAVVYPADLPGLEGMLRKAQAWITWGEIRKDVLAKLLEVRGRAPGDKKLTPEYIKEKFGVNSFEELAEKIINGEVVLHKQEAIKPFFRLHPPRGGFKKSIKKPYRSGGEAGYRGEAINELVLRML</sequence>
<accession>A8ABZ9</accession>
<keyword id="KW-1185">Reference proteome</keyword>
<keyword id="KW-0687">Ribonucleoprotein</keyword>
<keyword id="KW-0689">Ribosomal protein</keyword>
<reference key="1">
    <citation type="journal article" date="2008" name="Genome Biol.">
        <title>A genomic analysis of the archaeal system Ignicoccus hospitalis-Nanoarchaeum equitans.</title>
        <authorList>
            <person name="Podar M."/>
            <person name="Anderson I."/>
            <person name="Makarova K.S."/>
            <person name="Elkins J.G."/>
            <person name="Ivanova N."/>
            <person name="Wall M.A."/>
            <person name="Lykidis A."/>
            <person name="Mavromatis K."/>
            <person name="Sun H."/>
            <person name="Hudson M.E."/>
            <person name="Chen W."/>
            <person name="Deciu C."/>
            <person name="Hutchison D."/>
            <person name="Eads J.R."/>
            <person name="Anderson A."/>
            <person name="Fernandes F."/>
            <person name="Szeto E."/>
            <person name="Lapidus A."/>
            <person name="Kyrpides N.C."/>
            <person name="Saier M.H. Jr."/>
            <person name="Richardson P.M."/>
            <person name="Rachel R."/>
            <person name="Huber H."/>
            <person name="Eisen J.A."/>
            <person name="Koonin E.V."/>
            <person name="Keller M."/>
            <person name="Stetter K.O."/>
        </authorList>
    </citation>
    <scope>NUCLEOTIDE SEQUENCE [LARGE SCALE GENOMIC DNA]</scope>
    <source>
        <strain>KIN4/I / DSM 18386 / JCM 14125</strain>
    </source>
</reference>